<protein>
    <recommendedName>
        <fullName evidence="1">Beta-ketoacyl-[acyl-carrier-protein] synthase III</fullName>
        <shortName evidence="1">Beta-ketoacyl-ACP synthase III</shortName>
        <shortName evidence="1">KAS III</shortName>
        <ecNumber evidence="1">2.3.1.180</ecNumber>
    </recommendedName>
    <alternativeName>
        <fullName evidence="1">3-oxoacyl-[acyl-carrier-protein] synthase 3</fullName>
    </alternativeName>
    <alternativeName>
        <fullName evidence="1">3-oxoacyl-[acyl-carrier-protein] synthase III</fullName>
    </alternativeName>
</protein>
<dbReference type="EC" id="2.3.1.180" evidence="1"/>
<dbReference type="EMBL" id="CP000848">
    <property type="protein sequence ID" value="ABV76767.1"/>
    <property type="molecule type" value="Genomic_DNA"/>
</dbReference>
<dbReference type="RefSeq" id="WP_010977768.1">
    <property type="nucleotide sequence ID" value="NZ_CP121767.1"/>
</dbReference>
<dbReference type="SMR" id="A8GTP2"/>
<dbReference type="KEGG" id="rri:A1G_06570"/>
<dbReference type="HOGENOM" id="CLU_039592_3_1_5"/>
<dbReference type="UniPathway" id="UPA00094"/>
<dbReference type="Proteomes" id="UP000006832">
    <property type="component" value="Chromosome"/>
</dbReference>
<dbReference type="GO" id="GO:0005737">
    <property type="term" value="C:cytoplasm"/>
    <property type="evidence" value="ECO:0007669"/>
    <property type="project" value="UniProtKB-SubCell"/>
</dbReference>
<dbReference type="GO" id="GO:0004315">
    <property type="term" value="F:3-oxoacyl-[acyl-carrier-protein] synthase activity"/>
    <property type="evidence" value="ECO:0007669"/>
    <property type="project" value="InterPro"/>
</dbReference>
<dbReference type="GO" id="GO:0033818">
    <property type="term" value="F:beta-ketoacyl-acyl-carrier-protein synthase III activity"/>
    <property type="evidence" value="ECO:0007669"/>
    <property type="project" value="UniProtKB-UniRule"/>
</dbReference>
<dbReference type="GO" id="GO:0006633">
    <property type="term" value="P:fatty acid biosynthetic process"/>
    <property type="evidence" value="ECO:0007669"/>
    <property type="project" value="UniProtKB-UniRule"/>
</dbReference>
<dbReference type="GO" id="GO:0044550">
    <property type="term" value="P:secondary metabolite biosynthetic process"/>
    <property type="evidence" value="ECO:0007669"/>
    <property type="project" value="TreeGrafter"/>
</dbReference>
<dbReference type="CDD" id="cd00830">
    <property type="entry name" value="KAS_III"/>
    <property type="match status" value="1"/>
</dbReference>
<dbReference type="FunFam" id="3.40.47.10:FF:000004">
    <property type="entry name" value="3-oxoacyl-[acyl-carrier-protein] synthase 3"/>
    <property type="match status" value="1"/>
</dbReference>
<dbReference type="Gene3D" id="3.40.47.10">
    <property type="match status" value="1"/>
</dbReference>
<dbReference type="HAMAP" id="MF_01815">
    <property type="entry name" value="FabH"/>
    <property type="match status" value="1"/>
</dbReference>
<dbReference type="InterPro" id="IPR013747">
    <property type="entry name" value="ACP_syn_III_C"/>
</dbReference>
<dbReference type="InterPro" id="IPR013751">
    <property type="entry name" value="ACP_syn_III_N"/>
</dbReference>
<dbReference type="InterPro" id="IPR004655">
    <property type="entry name" value="FabH"/>
</dbReference>
<dbReference type="InterPro" id="IPR016039">
    <property type="entry name" value="Thiolase-like"/>
</dbReference>
<dbReference type="NCBIfam" id="TIGR00747">
    <property type="entry name" value="fabH"/>
    <property type="match status" value="1"/>
</dbReference>
<dbReference type="NCBIfam" id="NF006829">
    <property type="entry name" value="PRK09352.1"/>
    <property type="match status" value="1"/>
</dbReference>
<dbReference type="PANTHER" id="PTHR34069">
    <property type="entry name" value="3-OXOACYL-[ACYL-CARRIER-PROTEIN] SYNTHASE 3"/>
    <property type="match status" value="1"/>
</dbReference>
<dbReference type="PANTHER" id="PTHR34069:SF2">
    <property type="entry name" value="BETA-KETOACYL-[ACYL-CARRIER-PROTEIN] SYNTHASE III"/>
    <property type="match status" value="1"/>
</dbReference>
<dbReference type="Pfam" id="PF08545">
    <property type="entry name" value="ACP_syn_III"/>
    <property type="match status" value="1"/>
</dbReference>
<dbReference type="Pfam" id="PF08541">
    <property type="entry name" value="ACP_syn_III_C"/>
    <property type="match status" value="1"/>
</dbReference>
<dbReference type="SUPFAM" id="SSF53901">
    <property type="entry name" value="Thiolase-like"/>
    <property type="match status" value="1"/>
</dbReference>
<gene>
    <name evidence="1" type="primary">fabH</name>
    <name type="ordered locus">A1G_06570</name>
</gene>
<feature type="chain" id="PRO_1000056401" description="Beta-ketoacyl-[acyl-carrier-protein] synthase III">
    <location>
        <begin position="1"/>
        <end position="318"/>
    </location>
</feature>
<feature type="region of interest" description="ACP-binding" evidence="1">
    <location>
        <begin position="246"/>
        <end position="250"/>
    </location>
</feature>
<feature type="active site" evidence="1">
    <location>
        <position position="112"/>
    </location>
</feature>
<feature type="active site" evidence="1">
    <location>
        <position position="245"/>
    </location>
</feature>
<feature type="active site" evidence="1">
    <location>
        <position position="275"/>
    </location>
</feature>
<organism>
    <name type="scientific">Rickettsia rickettsii (strain Sheila Smith)</name>
    <dbReference type="NCBI Taxonomy" id="392021"/>
    <lineage>
        <taxon>Bacteria</taxon>
        <taxon>Pseudomonadati</taxon>
        <taxon>Pseudomonadota</taxon>
        <taxon>Alphaproteobacteria</taxon>
        <taxon>Rickettsiales</taxon>
        <taxon>Rickettsiaceae</taxon>
        <taxon>Rickettsieae</taxon>
        <taxon>Rickettsia</taxon>
        <taxon>spotted fever group</taxon>
    </lineage>
</organism>
<name>FABH_RICRS</name>
<evidence type="ECO:0000255" key="1">
    <source>
        <dbReference type="HAMAP-Rule" id="MF_01815"/>
    </source>
</evidence>
<keyword id="KW-0012">Acyltransferase</keyword>
<keyword id="KW-0963">Cytoplasm</keyword>
<keyword id="KW-0275">Fatty acid biosynthesis</keyword>
<keyword id="KW-0276">Fatty acid metabolism</keyword>
<keyword id="KW-0444">Lipid biosynthesis</keyword>
<keyword id="KW-0443">Lipid metabolism</keyword>
<keyword id="KW-0511">Multifunctional enzyme</keyword>
<keyword id="KW-0808">Transferase</keyword>
<accession>A8GTP2</accession>
<comment type="function">
    <text evidence="1">Catalyzes the condensation reaction of fatty acid synthesis by the addition to an acyl acceptor of two carbons from malonyl-ACP. Catalyzes the first condensation reaction which initiates fatty acid synthesis and may therefore play a role in governing the total rate of fatty acid production. Possesses both acetoacetyl-ACP synthase and acetyl transacylase activities. Its substrate specificity determines the biosynthesis of branched-chain and/or straight-chain of fatty acids.</text>
</comment>
<comment type="catalytic activity">
    <reaction evidence="1">
        <text>malonyl-[ACP] + acetyl-CoA + H(+) = 3-oxobutanoyl-[ACP] + CO2 + CoA</text>
        <dbReference type="Rhea" id="RHEA:12080"/>
        <dbReference type="Rhea" id="RHEA-COMP:9623"/>
        <dbReference type="Rhea" id="RHEA-COMP:9625"/>
        <dbReference type="ChEBI" id="CHEBI:15378"/>
        <dbReference type="ChEBI" id="CHEBI:16526"/>
        <dbReference type="ChEBI" id="CHEBI:57287"/>
        <dbReference type="ChEBI" id="CHEBI:57288"/>
        <dbReference type="ChEBI" id="CHEBI:78449"/>
        <dbReference type="ChEBI" id="CHEBI:78450"/>
        <dbReference type="EC" id="2.3.1.180"/>
    </reaction>
</comment>
<comment type="pathway">
    <text evidence="1">Lipid metabolism; fatty acid biosynthesis.</text>
</comment>
<comment type="subunit">
    <text evidence="1">Homodimer.</text>
</comment>
<comment type="subcellular location">
    <subcellularLocation>
        <location evidence="1">Cytoplasm</location>
    </subcellularLocation>
</comment>
<comment type="domain">
    <text evidence="1">The last Arg residue of the ACP-binding site is essential for the weak association between ACP/AcpP and FabH.</text>
</comment>
<comment type="similarity">
    <text evidence="1">Belongs to the thiolase-like superfamily. FabH family.</text>
</comment>
<reference key="1">
    <citation type="submission" date="2007-09" db="EMBL/GenBank/DDBJ databases">
        <title>Complete genome sequence of Rickettsia rickettsii.</title>
        <authorList>
            <person name="Madan A."/>
            <person name="Fahey J."/>
            <person name="Helton E."/>
            <person name="Ketteman M."/>
            <person name="Madan A."/>
            <person name="Rodrigues S."/>
            <person name="Sanchez A."/>
            <person name="Dasch G."/>
            <person name="Eremeeva M."/>
        </authorList>
    </citation>
    <scope>NUCLEOTIDE SEQUENCE [LARGE SCALE GENOMIC DNA]</scope>
    <source>
        <strain>Sheila Smith</strain>
    </source>
</reference>
<proteinExistence type="inferred from homology"/>
<sequence>MTCKIIGCGGYLPSKIVSNDELAKFVDTNDEWIRTRTGITQRHIAGDTEYTSHLALKSAEKAIADAGISVNDIDLIITCTTTPDNSFPSVASKLQGYLGLTNIPSFDLQAVCAGFVYGLQVANSLISSDKYKTILLIGAEKMTSLLDWNDRTTCVLFGDGAGSVILQRSSDDSGLIDSNIFSSGADYDEILYTNGGVSMNGISGKIVMQGQKLFRHAIEKMQQSIKDLLHANQFSVSDIDYFIPHQANIRIINKLAELLNIEEHKVVKTVDKHANCSAASIPLALSTLKASGKIKKGDILLFSAIGAGLTWGSAFIRW</sequence>